<dbReference type="EC" id="2.7.7.72" evidence="1"/>
<dbReference type="EC" id="3.1.3.-" evidence="1"/>
<dbReference type="EC" id="3.1.4.-" evidence="1"/>
<dbReference type="EMBL" id="CP000546">
    <property type="protein sequence ID" value="ABN02351.1"/>
    <property type="molecule type" value="Genomic_DNA"/>
</dbReference>
<dbReference type="RefSeq" id="WP_004197240.1">
    <property type="nucleotide sequence ID" value="NC_008836.1"/>
</dbReference>
<dbReference type="SMR" id="A2S800"/>
<dbReference type="KEGG" id="bml:BMA10229_A2105"/>
<dbReference type="HOGENOM" id="CLU_015961_1_1_4"/>
<dbReference type="Proteomes" id="UP000002283">
    <property type="component" value="Chromosome I"/>
</dbReference>
<dbReference type="GO" id="GO:0005524">
    <property type="term" value="F:ATP binding"/>
    <property type="evidence" value="ECO:0007669"/>
    <property type="project" value="UniProtKB-UniRule"/>
</dbReference>
<dbReference type="GO" id="GO:0004810">
    <property type="term" value="F:CCA tRNA nucleotidyltransferase activity"/>
    <property type="evidence" value="ECO:0007669"/>
    <property type="project" value="UniProtKB-UniRule"/>
</dbReference>
<dbReference type="GO" id="GO:0004112">
    <property type="term" value="F:cyclic-nucleotide phosphodiesterase activity"/>
    <property type="evidence" value="ECO:0007669"/>
    <property type="project" value="UniProtKB-UniRule"/>
</dbReference>
<dbReference type="GO" id="GO:0000287">
    <property type="term" value="F:magnesium ion binding"/>
    <property type="evidence" value="ECO:0007669"/>
    <property type="project" value="UniProtKB-UniRule"/>
</dbReference>
<dbReference type="GO" id="GO:0016791">
    <property type="term" value="F:phosphatase activity"/>
    <property type="evidence" value="ECO:0007669"/>
    <property type="project" value="UniProtKB-UniRule"/>
</dbReference>
<dbReference type="GO" id="GO:0000049">
    <property type="term" value="F:tRNA binding"/>
    <property type="evidence" value="ECO:0007669"/>
    <property type="project" value="UniProtKB-UniRule"/>
</dbReference>
<dbReference type="GO" id="GO:0042245">
    <property type="term" value="P:RNA repair"/>
    <property type="evidence" value="ECO:0007669"/>
    <property type="project" value="UniProtKB-KW"/>
</dbReference>
<dbReference type="GO" id="GO:0001680">
    <property type="term" value="P:tRNA 3'-terminal CCA addition"/>
    <property type="evidence" value="ECO:0007669"/>
    <property type="project" value="UniProtKB-UniRule"/>
</dbReference>
<dbReference type="CDD" id="cd05398">
    <property type="entry name" value="NT_ClassII-CCAase"/>
    <property type="match status" value="1"/>
</dbReference>
<dbReference type="Gene3D" id="3.30.460.10">
    <property type="entry name" value="Beta Polymerase, domain 2"/>
    <property type="match status" value="1"/>
</dbReference>
<dbReference type="Gene3D" id="1.10.3090.10">
    <property type="entry name" value="cca-adding enzyme, domain 2"/>
    <property type="match status" value="1"/>
</dbReference>
<dbReference type="HAMAP" id="MF_01261">
    <property type="entry name" value="CCA_bact_type1"/>
    <property type="match status" value="1"/>
</dbReference>
<dbReference type="HAMAP" id="MF_01262">
    <property type="entry name" value="CCA_bact_type2"/>
    <property type="match status" value="1"/>
</dbReference>
<dbReference type="InterPro" id="IPR012006">
    <property type="entry name" value="CCA_bact"/>
</dbReference>
<dbReference type="InterPro" id="IPR006674">
    <property type="entry name" value="HD_domain"/>
</dbReference>
<dbReference type="InterPro" id="IPR043519">
    <property type="entry name" value="NT_sf"/>
</dbReference>
<dbReference type="InterPro" id="IPR002646">
    <property type="entry name" value="PolA_pol_head_dom"/>
</dbReference>
<dbReference type="InterPro" id="IPR032828">
    <property type="entry name" value="PolyA_RNA-bd"/>
</dbReference>
<dbReference type="InterPro" id="IPR050124">
    <property type="entry name" value="tRNA_CCA-adding_enzyme"/>
</dbReference>
<dbReference type="NCBIfam" id="NF008137">
    <property type="entry name" value="PRK10885.1"/>
    <property type="match status" value="1"/>
</dbReference>
<dbReference type="PANTHER" id="PTHR47545">
    <property type="entry name" value="MULTIFUNCTIONAL CCA PROTEIN"/>
    <property type="match status" value="1"/>
</dbReference>
<dbReference type="PANTHER" id="PTHR47545:SF1">
    <property type="entry name" value="MULTIFUNCTIONAL CCA PROTEIN"/>
    <property type="match status" value="1"/>
</dbReference>
<dbReference type="Pfam" id="PF01966">
    <property type="entry name" value="HD"/>
    <property type="match status" value="1"/>
</dbReference>
<dbReference type="Pfam" id="PF01743">
    <property type="entry name" value="PolyA_pol"/>
    <property type="match status" value="1"/>
</dbReference>
<dbReference type="Pfam" id="PF12627">
    <property type="entry name" value="PolyA_pol_RNAbd"/>
    <property type="match status" value="1"/>
</dbReference>
<dbReference type="PIRSF" id="PIRSF000813">
    <property type="entry name" value="CCA_bact"/>
    <property type="match status" value="1"/>
</dbReference>
<dbReference type="SUPFAM" id="SSF81301">
    <property type="entry name" value="Nucleotidyltransferase"/>
    <property type="match status" value="1"/>
</dbReference>
<dbReference type="SUPFAM" id="SSF81891">
    <property type="entry name" value="Poly A polymerase C-terminal region-like"/>
    <property type="match status" value="1"/>
</dbReference>
<dbReference type="PROSITE" id="PS51831">
    <property type="entry name" value="HD"/>
    <property type="match status" value="1"/>
</dbReference>
<protein>
    <recommendedName>
        <fullName evidence="1">Multifunctional CCA protein</fullName>
    </recommendedName>
    <domain>
        <recommendedName>
            <fullName evidence="1">CCA-adding enzyme</fullName>
            <ecNumber evidence="1">2.7.7.72</ecNumber>
        </recommendedName>
        <alternativeName>
            <fullName evidence="1">CCA tRNA nucleotidyltransferase</fullName>
        </alternativeName>
        <alternativeName>
            <fullName evidence="1">tRNA CCA-pyrophosphorylase</fullName>
        </alternativeName>
        <alternativeName>
            <fullName evidence="1">tRNA adenylyl-/cytidylyl-transferase</fullName>
        </alternativeName>
        <alternativeName>
            <fullName evidence="1">tRNA nucleotidyltransferase</fullName>
        </alternativeName>
        <alternativeName>
            <fullName evidence="1">tRNA-NT</fullName>
        </alternativeName>
    </domain>
    <domain>
        <recommendedName>
            <fullName evidence="1">2'-nucleotidase</fullName>
            <ecNumber evidence="1">3.1.3.-</ecNumber>
        </recommendedName>
    </domain>
    <domain>
        <recommendedName>
            <fullName evidence="1">2',3'-cyclic phosphodiesterase</fullName>
            <ecNumber evidence="1">3.1.4.-</ecNumber>
        </recommendedName>
    </domain>
    <domain>
        <recommendedName>
            <fullName evidence="1">Phosphatase</fullName>
            <ecNumber evidence="1">3.1.3.-</ecNumber>
        </recommendedName>
    </domain>
</protein>
<proteinExistence type="inferred from homology"/>
<comment type="function">
    <text evidence="1">Catalyzes the addition and repair of the essential 3'-terminal CCA sequence in tRNAs without using a nucleic acid template. Adds these three nucleotides in the order of C, C, and A to the tRNA nucleotide-73, using CTP and ATP as substrates and producing inorganic pyrophosphate. tRNA 3'-terminal CCA addition is required both for tRNA processing and repair. Also involved in tRNA surveillance by mediating tandem CCA addition to generate a CCACCA at the 3' terminus of unstable tRNAs. While stable tRNAs receive only 3'-terminal CCA, unstable tRNAs are marked with CCACCA and rapidly degraded.</text>
</comment>
<comment type="catalytic activity">
    <reaction evidence="1">
        <text>a tRNA precursor + 2 CTP + ATP = a tRNA with a 3' CCA end + 3 diphosphate</text>
        <dbReference type="Rhea" id="RHEA:14433"/>
        <dbReference type="Rhea" id="RHEA-COMP:10465"/>
        <dbReference type="Rhea" id="RHEA-COMP:10468"/>
        <dbReference type="ChEBI" id="CHEBI:30616"/>
        <dbReference type="ChEBI" id="CHEBI:33019"/>
        <dbReference type="ChEBI" id="CHEBI:37563"/>
        <dbReference type="ChEBI" id="CHEBI:74896"/>
        <dbReference type="ChEBI" id="CHEBI:83071"/>
        <dbReference type="EC" id="2.7.7.72"/>
    </reaction>
</comment>
<comment type="catalytic activity">
    <reaction evidence="1">
        <text>a tRNA with a 3' CCA end + 2 CTP + ATP = a tRNA with a 3' CCACCA end + 3 diphosphate</text>
        <dbReference type="Rhea" id="RHEA:76235"/>
        <dbReference type="Rhea" id="RHEA-COMP:10468"/>
        <dbReference type="Rhea" id="RHEA-COMP:18655"/>
        <dbReference type="ChEBI" id="CHEBI:30616"/>
        <dbReference type="ChEBI" id="CHEBI:33019"/>
        <dbReference type="ChEBI" id="CHEBI:37563"/>
        <dbReference type="ChEBI" id="CHEBI:83071"/>
        <dbReference type="ChEBI" id="CHEBI:195187"/>
    </reaction>
    <physiologicalReaction direction="left-to-right" evidence="1">
        <dbReference type="Rhea" id="RHEA:76236"/>
    </physiologicalReaction>
</comment>
<comment type="cofactor">
    <cofactor evidence="1">
        <name>Mg(2+)</name>
        <dbReference type="ChEBI" id="CHEBI:18420"/>
    </cofactor>
    <text evidence="1">Magnesium is required for nucleotidyltransferase activity.</text>
</comment>
<comment type="cofactor">
    <cofactor evidence="1">
        <name>Ni(2+)</name>
        <dbReference type="ChEBI" id="CHEBI:49786"/>
    </cofactor>
    <text evidence="1">Nickel for phosphatase activity.</text>
</comment>
<comment type="subunit">
    <text evidence="1">Monomer. Can also form homodimers and oligomers.</text>
</comment>
<comment type="domain">
    <text evidence="1">Comprises two domains: an N-terminal domain containing the nucleotidyltransferase activity and a C-terminal HD domain associated with both phosphodiesterase and phosphatase activities.</text>
</comment>
<comment type="miscellaneous">
    <text evidence="1">A single active site specifically recognizes both ATP and CTP and is responsible for their addition.</text>
</comment>
<comment type="similarity">
    <text evidence="1">Belongs to the tRNA nucleotidyltransferase/poly(A) polymerase family. Bacterial CCA-adding enzyme type 1 subfamily.</text>
</comment>
<feature type="chain" id="PRO_1000054254" description="Multifunctional CCA protein">
    <location>
        <begin position="1"/>
        <end position="413"/>
    </location>
</feature>
<feature type="domain" description="HD" evidence="1">
    <location>
        <begin position="232"/>
        <end position="333"/>
    </location>
</feature>
<feature type="binding site" evidence="1">
    <location>
        <position position="8"/>
    </location>
    <ligand>
        <name>ATP</name>
        <dbReference type="ChEBI" id="CHEBI:30616"/>
    </ligand>
</feature>
<feature type="binding site" evidence="1">
    <location>
        <position position="8"/>
    </location>
    <ligand>
        <name>CTP</name>
        <dbReference type="ChEBI" id="CHEBI:37563"/>
    </ligand>
</feature>
<feature type="binding site" evidence="1">
    <location>
        <position position="11"/>
    </location>
    <ligand>
        <name>ATP</name>
        <dbReference type="ChEBI" id="CHEBI:30616"/>
    </ligand>
</feature>
<feature type="binding site" evidence="1">
    <location>
        <position position="11"/>
    </location>
    <ligand>
        <name>CTP</name>
        <dbReference type="ChEBI" id="CHEBI:37563"/>
    </ligand>
</feature>
<feature type="binding site" evidence="1">
    <location>
        <position position="21"/>
    </location>
    <ligand>
        <name>Mg(2+)</name>
        <dbReference type="ChEBI" id="CHEBI:18420"/>
    </ligand>
</feature>
<feature type="binding site" evidence="1">
    <location>
        <position position="23"/>
    </location>
    <ligand>
        <name>Mg(2+)</name>
        <dbReference type="ChEBI" id="CHEBI:18420"/>
    </ligand>
</feature>
<feature type="binding site" evidence="1">
    <location>
        <position position="91"/>
    </location>
    <ligand>
        <name>ATP</name>
        <dbReference type="ChEBI" id="CHEBI:30616"/>
    </ligand>
</feature>
<feature type="binding site" evidence="1">
    <location>
        <position position="91"/>
    </location>
    <ligand>
        <name>CTP</name>
        <dbReference type="ChEBI" id="CHEBI:37563"/>
    </ligand>
</feature>
<feature type="binding site" evidence="1">
    <location>
        <position position="143"/>
    </location>
    <ligand>
        <name>ATP</name>
        <dbReference type="ChEBI" id="CHEBI:30616"/>
    </ligand>
</feature>
<feature type="binding site" evidence="1">
    <location>
        <position position="143"/>
    </location>
    <ligand>
        <name>CTP</name>
        <dbReference type="ChEBI" id="CHEBI:37563"/>
    </ligand>
</feature>
<feature type="binding site" evidence="1">
    <location>
        <position position="146"/>
    </location>
    <ligand>
        <name>ATP</name>
        <dbReference type="ChEBI" id="CHEBI:30616"/>
    </ligand>
</feature>
<feature type="binding site" evidence="1">
    <location>
        <position position="146"/>
    </location>
    <ligand>
        <name>CTP</name>
        <dbReference type="ChEBI" id="CHEBI:37563"/>
    </ligand>
</feature>
<name>CCA_BURM9</name>
<sequence>MKIYAVGGAIRDALLGLPVRDRDYVVVGATPEQMAAQRFRPVGKDFPVFLHPDTHEEYALARTERKTAAGYHGFQFYYAPDVTLEQDLVRRDLTINAMAREVSPDGALVGPVVDPFGGQADLRAKLFRHVGDAFVEDPVRILRVARFAARFAEFAVAPDTAALMRAMVDAGEVDALVPERVWQELARGLMEAKPSRMFAVLRECGALARILPEIDALFGVPQRADYHPEVDTGVHVMMVIDHAAKQGYSLPVRFAALTHDLGKATTPADVLPRHIGHEGRSVDLLKPLCERLRVPNECRDLALVVAREHGNLHRVMEMGAAALVRLLERADALRKPARFAEALQASEADARGRLGLETKPYPQAERLRQALVAARAVDAGAIAQGLAGEPAKIKDAVHRARVRAVAQAVGVAD</sequence>
<reference key="1">
    <citation type="journal article" date="2010" name="Genome Biol. Evol.">
        <title>Continuing evolution of Burkholderia mallei through genome reduction and large-scale rearrangements.</title>
        <authorList>
            <person name="Losada L."/>
            <person name="Ronning C.M."/>
            <person name="DeShazer D."/>
            <person name="Woods D."/>
            <person name="Fedorova N."/>
            <person name="Kim H.S."/>
            <person name="Shabalina S.A."/>
            <person name="Pearson T.R."/>
            <person name="Brinkac L."/>
            <person name="Tan P."/>
            <person name="Nandi T."/>
            <person name="Crabtree J."/>
            <person name="Badger J."/>
            <person name="Beckstrom-Sternberg S."/>
            <person name="Saqib M."/>
            <person name="Schutzer S.E."/>
            <person name="Keim P."/>
            <person name="Nierman W.C."/>
        </authorList>
    </citation>
    <scope>NUCLEOTIDE SEQUENCE [LARGE SCALE GENOMIC DNA]</scope>
    <source>
        <strain>NCTC 10229</strain>
    </source>
</reference>
<organism>
    <name type="scientific">Burkholderia mallei (strain NCTC 10229)</name>
    <dbReference type="NCBI Taxonomy" id="412022"/>
    <lineage>
        <taxon>Bacteria</taxon>
        <taxon>Pseudomonadati</taxon>
        <taxon>Pseudomonadota</taxon>
        <taxon>Betaproteobacteria</taxon>
        <taxon>Burkholderiales</taxon>
        <taxon>Burkholderiaceae</taxon>
        <taxon>Burkholderia</taxon>
        <taxon>pseudomallei group</taxon>
    </lineage>
</organism>
<evidence type="ECO:0000255" key="1">
    <source>
        <dbReference type="HAMAP-Rule" id="MF_01261"/>
    </source>
</evidence>
<gene>
    <name evidence="1" type="primary">cca</name>
    <name type="ordered locus">BMA10229_A2105</name>
</gene>
<accession>A2S800</accession>
<keyword id="KW-0067">ATP-binding</keyword>
<keyword id="KW-0378">Hydrolase</keyword>
<keyword id="KW-0460">Magnesium</keyword>
<keyword id="KW-0479">Metal-binding</keyword>
<keyword id="KW-0511">Multifunctional enzyme</keyword>
<keyword id="KW-0533">Nickel</keyword>
<keyword id="KW-0547">Nucleotide-binding</keyword>
<keyword id="KW-0548">Nucleotidyltransferase</keyword>
<keyword id="KW-0692">RNA repair</keyword>
<keyword id="KW-0694">RNA-binding</keyword>
<keyword id="KW-0808">Transferase</keyword>
<keyword id="KW-0819">tRNA processing</keyword>